<organism>
    <name type="scientific">Ignicoccus hospitalis (strain KIN4/I / DSM 18386 / JCM 14125)</name>
    <dbReference type="NCBI Taxonomy" id="453591"/>
    <lineage>
        <taxon>Archaea</taxon>
        <taxon>Thermoproteota</taxon>
        <taxon>Thermoprotei</taxon>
        <taxon>Desulfurococcales</taxon>
        <taxon>Desulfurococcaceae</taxon>
        <taxon>Ignicoccus</taxon>
    </lineage>
</organism>
<accession>A8ABQ7</accession>
<sequence>MSAITGRVSTYHREKFPEWKVKLVNEVKEKLKENDVVLVLDLVETPANLVHKFRKKFRKELPYMKVIKNNLVRKAFEQSGIEMPKEMDEQLVGSNMFIFTNDNPFKLALKISKFSMPAPAKPGDVAQSEIVVPAGDTGLTPGPILSTFGKLKIKTMVKGGTIHIAKDTVVAKPGDVISPELASLLQKLGITPMELKMKIKGAYIKSLNRWVPAEELVLDLNKYKEQIQEAYTNALALGVSIAYPVPEVLKLSVAKAFQDALKVAVEAGWLTKETAPYLLSKAYAQALALVGALGDKAKELGIEVEVPAAPAPEAKEEKKEEAEEEEEEKKEVSEEDLSAGLGALFG</sequence>
<name>RL10_IGNH4</name>
<gene>
    <name evidence="1" type="primary">rpl10</name>
    <name evidence="1" type="synonym">rplP0</name>
    <name type="ordered locus">Igni_1182</name>
</gene>
<proteinExistence type="inferred from homology"/>
<comment type="function">
    <text evidence="1">Forms part of the ribosomal stalk, playing a central role in the interaction of the ribosome with GTP-bound translation factors.</text>
</comment>
<comment type="subunit">
    <text evidence="1">Part of the 50S ribosomal subunit. Forms part of the ribosomal stalk which helps the ribosome interact with GTP-bound translation factors. Forms a heptameric L10(L12)2(L12)2(L12)2 complex, where L10 forms an elongated spine to which the L12 dimers bind in a sequential fashion.</text>
</comment>
<comment type="similarity">
    <text evidence="1">Belongs to the universal ribosomal protein uL10 family.</text>
</comment>
<dbReference type="EMBL" id="CP000816">
    <property type="protein sequence ID" value="ABU82359.1"/>
    <property type="molecule type" value="Genomic_DNA"/>
</dbReference>
<dbReference type="RefSeq" id="WP_012123323.1">
    <property type="nucleotide sequence ID" value="NC_009776.1"/>
</dbReference>
<dbReference type="SMR" id="A8ABQ7"/>
<dbReference type="STRING" id="453591.Igni_1182"/>
<dbReference type="GeneID" id="5562883"/>
<dbReference type="KEGG" id="iho:Igni_1182"/>
<dbReference type="eggNOG" id="arCOG04288">
    <property type="taxonomic scope" value="Archaea"/>
</dbReference>
<dbReference type="HOGENOM" id="CLU_053173_0_0_2"/>
<dbReference type="PhylomeDB" id="A8ABQ7"/>
<dbReference type="Proteomes" id="UP000000262">
    <property type="component" value="Chromosome"/>
</dbReference>
<dbReference type="GO" id="GO:0022625">
    <property type="term" value="C:cytosolic large ribosomal subunit"/>
    <property type="evidence" value="ECO:0007669"/>
    <property type="project" value="TreeGrafter"/>
</dbReference>
<dbReference type="GO" id="GO:0070180">
    <property type="term" value="F:large ribosomal subunit rRNA binding"/>
    <property type="evidence" value="ECO:0007669"/>
    <property type="project" value="UniProtKB-UniRule"/>
</dbReference>
<dbReference type="GO" id="GO:0003735">
    <property type="term" value="F:structural constituent of ribosome"/>
    <property type="evidence" value="ECO:0007669"/>
    <property type="project" value="TreeGrafter"/>
</dbReference>
<dbReference type="GO" id="GO:0002181">
    <property type="term" value="P:cytoplasmic translation"/>
    <property type="evidence" value="ECO:0007669"/>
    <property type="project" value="TreeGrafter"/>
</dbReference>
<dbReference type="GO" id="GO:0000027">
    <property type="term" value="P:ribosomal large subunit assembly"/>
    <property type="evidence" value="ECO:0007669"/>
    <property type="project" value="TreeGrafter"/>
</dbReference>
<dbReference type="FunFam" id="3.90.105.20:FF:000001">
    <property type="entry name" value="60S acidic ribosomal protein P0"/>
    <property type="match status" value="1"/>
</dbReference>
<dbReference type="Gene3D" id="3.30.70.1730">
    <property type="match status" value="1"/>
</dbReference>
<dbReference type="Gene3D" id="3.90.105.20">
    <property type="match status" value="1"/>
</dbReference>
<dbReference type="Gene3D" id="6.10.140.760">
    <property type="match status" value="1"/>
</dbReference>
<dbReference type="HAMAP" id="MF_00280">
    <property type="entry name" value="Ribosomal_uL10_arch"/>
    <property type="match status" value="1"/>
</dbReference>
<dbReference type="InterPro" id="IPR050323">
    <property type="entry name" value="Ribosomal_protein_uL10"/>
</dbReference>
<dbReference type="InterPro" id="IPR001790">
    <property type="entry name" value="Ribosomal_uL10"/>
</dbReference>
<dbReference type="InterPro" id="IPR040637">
    <property type="entry name" value="Ribosomal_uL10-like_insert"/>
</dbReference>
<dbReference type="InterPro" id="IPR043164">
    <property type="entry name" value="Ribosomal_uL10-like_insert_sf"/>
</dbReference>
<dbReference type="InterPro" id="IPR043141">
    <property type="entry name" value="Ribosomal_uL10-like_sf"/>
</dbReference>
<dbReference type="InterPro" id="IPR022909">
    <property type="entry name" value="Ribosomal_uL10_arc"/>
</dbReference>
<dbReference type="NCBIfam" id="NF003095">
    <property type="entry name" value="PRK04019.1-1"/>
    <property type="match status" value="1"/>
</dbReference>
<dbReference type="PANTHER" id="PTHR45699">
    <property type="entry name" value="60S ACIDIC RIBOSOMAL PROTEIN P0"/>
    <property type="match status" value="1"/>
</dbReference>
<dbReference type="PANTHER" id="PTHR45699:SF3">
    <property type="entry name" value="LARGE RIBOSOMAL SUBUNIT PROTEIN UL10"/>
    <property type="match status" value="1"/>
</dbReference>
<dbReference type="Pfam" id="PF00466">
    <property type="entry name" value="Ribosomal_L10"/>
    <property type="match status" value="1"/>
</dbReference>
<dbReference type="Pfam" id="PF17777">
    <property type="entry name" value="RL10P_insert"/>
    <property type="match status" value="1"/>
</dbReference>
<dbReference type="SUPFAM" id="SSF160369">
    <property type="entry name" value="Ribosomal protein L10-like"/>
    <property type="match status" value="1"/>
</dbReference>
<evidence type="ECO:0000255" key="1">
    <source>
        <dbReference type="HAMAP-Rule" id="MF_00280"/>
    </source>
</evidence>
<evidence type="ECO:0000256" key="2">
    <source>
        <dbReference type="SAM" id="MobiDB-lite"/>
    </source>
</evidence>
<evidence type="ECO:0000305" key="3"/>
<keyword id="KW-1185">Reference proteome</keyword>
<keyword id="KW-0687">Ribonucleoprotein</keyword>
<keyword id="KW-0689">Ribosomal protein</keyword>
<keyword id="KW-0694">RNA-binding</keyword>
<keyword id="KW-0699">rRNA-binding</keyword>
<protein>
    <recommendedName>
        <fullName evidence="1">Large ribosomal subunit protein uL10</fullName>
    </recommendedName>
    <alternativeName>
        <fullName evidence="3">50S ribosomal protein L10</fullName>
    </alternativeName>
    <alternativeName>
        <fullName evidence="1">Acidic ribosomal protein P0 homolog</fullName>
    </alternativeName>
</protein>
<feature type="chain" id="PRO_1000114836" description="Large ribosomal subunit protein uL10">
    <location>
        <begin position="1"/>
        <end position="346"/>
    </location>
</feature>
<feature type="region of interest" description="Disordered" evidence="2">
    <location>
        <begin position="305"/>
        <end position="346"/>
    </location>
</feature>
<feature type="compositionally biased region" description="Acidic residues" evidence="2">
    <location>
        <begin position="322"/>
        <end position="337"/>
    </location>
</feature>
<reference key="1">
    <citation type="journal article" date="2008" name="Genome Biol.">
        <title>A genomic analysis of the archaeal system Ignicoccus hospitalis-Nanoarchaeum equitans.</title>
        <authorList>
            <person name="Podar M."/>
            <person name="Anderson I."/>
            <person name="Makarova K.S."/>
            <person name="Elkins J.G."/>
            <person name="Ivanova N."/>
            <person name="Wall M.A."/>
            <person name="Lykidis A."/>
            <person name="Mavromatis K."/>
            <person name="Sun H."/>
            <person name="Hudson M.E."/>
            <person name="Chen W."/>
            <person name="Deciu C."/>
            <person name="Hutchison D."/>
            <person name="Eads J.R."/>
            <person name="Anderson A."/>
            <person name="Fernandes F."/>
            <person name="Szeto E."/>
            <person name="Lapidus A."/>
            <person name="Kyrpides N.C."/>
            <person name="Saier M.H. Jr."/>
            <person name="Richardson P.M."/>
            <person name="Rachel R."/>
            <person name="Huber H."/>
            <person name="Eisen J.A."/>
            <person name="Koonin E.V."/>
            <person name="Keller M."/>
            <person name="Stetter K.O."/>
        </authorList>
    </citation>
    <scope>NUCLEOTIDE SEQUENCE [LARGE SCALE GENOMIC DNA]</scope>
    <source>
        <strain>KIN4/I / DSM 18386 / JCM 14125</strain>
    </source>
</reference>